<comment type="subcellular location">
    <subcellularLocation>
        <location evidence="1">Mitochondrion inner membrane</location>
        <topology evidence="1">Multi-pass membrane protein</topology>
    </subcellularLocation>
</comment>
<comment type="similarity">
    <text evidence="3">Belongs to the mitochondrial carrier (TC 2.A.29) family.</text>
</comment>
<organism>
    <name type="scientific">Bos taurus</name>
    <name type="common">Bovine</name>
    <dbReference type="NCBI Taxonomy" id="9913"/>
    <lineage>
        <taxon>Eukaryota</taxon>
        <taxon>Metazoa</taxon>
        <taxon>Chordata</taxon>
        <taxon>Craniata</taxon>
        <taxon>Vertebrata</taxon>
        <taxon>Euteleostomi</taxon>
        <taxon>Mammalia</taxon>
        <taxon>Eutheria</taxon>
        <taxon>Laurasiatheria</taxon>
        <taxon>Artiodactyla</taxon>
        <taxon>Ruminantia</taxon>
        <taxon>Pecora</taxon>
        <taxon>Bovidae</taxon>
        <taxon>Bovinae</taxon>
        <taxon>Bos</taxon>
    </lineage>
</organism>
<gene>
    <name type="primary">SLC25A48</name>
</gene>
<keyword id="KW-0472">Membrane</keyword>
<keyword id="KW-0496">Mitochondrion</keyword>
<keyword id="KW-0999">Mitochondrion inner membrane</keyword>
<keyword id="KW-1185">Reference proteome</keyword>
<keyword id="KW-0677">Repeat</keyword>
<keyword id="KW-0812">Transmembrane</keyword>
<keyword id="KW-1133">Transmembrane helix</keyword>
<keyword id="KW-0813">Transport</keyword>
<dbReference type="EMBL" id="BC105228">
    <property type="protein sequence ID" value="AAI05229.1"/>
    <property type="molecule type" value="mRNA"/>
</dbReference>
<dbReference type="RefSeq" id="NP_001030386.1">
    <property type="nucleotide sequence ID" value="NM_001035309.1"/>
</dbReference>
<dbReference type="SMR" id="Q3MHI3"/>
<dbReference type="FunCoup" id="Q3MHI3">
    <property type="interactions" value="51"/>
</dbReference>
<dbReference type="STRING" id="9913.ENSBTAP00000032026"/>
<dbReference type="PaxDb" id="9913-ENSBTAP00000032026"/>
<dbReference type="GeneID" id="515496"/>
<dbReference type="KEGG" id="bta:515496"/>
<dbReference type="CTD" id="153328"/>
<dbReference type="eggNOG" id="KOG0758">
    <property type="taxonomic scope" value="Eukaryota"/>
</dbReference>
<dbReference type="eggNOG" id="KOG0761">
    <property type="taxonomic scope" value="Eukaryota"/>
</dbReference>
<dbReference type="InParanoid" id="Q3MHI3"/>
<dbReference type="OrthoDB" id="193856at2759"/>
<dbReference type="Proteomes" id="UP000009136">
    <property type="component" value="Unplaced"/>
</dbReference>
<dbReference type="GO" id="GO:0005743">
    <property type="term" value="C:mitochondrial inner membrane"/>
    <property type="evidence" value="ECO:0007669"/>
    <property type="project" value="UniProtKB-SubCell"/>
</dbReference>
<dbReference type="GO" id="GO:0005739">
    <property type="term" value="C:mitochondrion"/>
    <property type="evidence" value="ECO:0000318"/>
    <property type="project" value="GO_Central"/>
</dbReference>
<dbReference type="GO" id="GO:0022857">
    <property type="term" value="F:transmembrane transporter activity"/>
    <property type="evidence" value="ECO:0000318"/>
    <property type="project" value="GO_Central"/>
</dbReference>
<dbReference type="FunFam" id="1.50.40.10:FF:000058">
    <property type="entry name" value="Solute carrier family 25 member 48"/>
    <property type="match status" value="1"/>
</dbReference>
<dbReference type="Gene3D" id="1.50.40.10">
    <property type="entry name" value="Mitochondrial carrier domain"/>
    <property type="match status" value="1"/>
</dbReference>
<dbReference type="InterPro" id="IPR002067">
    <property type="entry name" value="Mit_carrier"/>
</dbReference>
<dbReference type="InterPro" id="IPR050567">
    <property type="entry name" value="Mitochondrial_Carrier"/>
</dbReference>
<dbReference type="InterPro" id="IPR018108">
    <property type="entry name" value="Mitochondrial_sb/sol_carrier"/>
</dbReference>
<dbReference type="InterPro" id="IPR023395">
    <property type="entry name" value="Mt_carrier_dom_sf"/>
</dbReference>
<dbReference type="PANTHER" id="PTHR45624">
    <property type="entry name" value="MITOCHONDRIAL BASIC AMINO ACIDS TRANSPORTER-RELATED"/>
    <property type="match status" value="1"/>
</dbReference>
<dbReference type="PANTHER" id="PTHR45624:SF7">
    <property type="entry name" value="SOLUTE CARRIER FAMILY 25 MEMBER 48"/>
    <property type="match status" value="1"/>
</dbReference>
<dbReference type="Pfam" id="PF00153">
    <property type="entry name" value="Mito_carr"/>
    <property type="match status" value="3"/>
</dbReference>
<dbReference type="PRINTS" id="PR00926">
    <property type="entry name" value="MITOCARRIER"/>
</dbReference>
<dbReference type="SUPFAM" id="SSF103506">
    <property type="entry name" value="Mitochondrial carrier"/>
    <property type="match status" value="1"/>
</dbReference>
<dbReference type="PROSITE" id="PS50920">
    <property type="entry name" value="SOLCAR"/>
    <property type="match status" value="3"/>
</dbReference>
<accession>Q3MHI3</accession>
<name>S2548_BOVIN</name>
<evidence type="ECO:0000250" key="1"/>
<evidence type="ECO:0000255" key="2"/>
<evidence type="ECO:0000305" key="3"/>
<reference key="1">
    <citation type="submission" date="2005-09" db="EMBL/GenBank/DDBJ databases">
        <authorList>
            <consortium name="NIH - Mammalian Gene Collection (MGC) project"/>
        </authorList>
    </citation>
    <scope>NUCLEOTIDE SEQUENCE [LARGE SCALE MRNA]</scope>
    <source>
        <strain>Hereford</strain>
        <tissue>Hypothalamus</tissue>
    </source>
</reference>
<sequence>MGNFQLEDFVAGWIGGAASVIVGHPLDTVKARLQAGSGYGSTLSCIRTVYRRESVFGFFKGMSFPLASIAVYNSVVFGVFSNTQRFLSHHRCQEPEAGPPHVLSDLLLASMVAGVVSVGLGAPVDLIEIRLQMQTQPFQEANLGLKPRVAALGEQPAYQGPVHCFATIVRTEGLAGLYRGASAMLLRDVPGYCLYFIPYVFLSDWITPEACAGPSPCAVWLAGGMAGAISWGTATPMDVVKSRLQADGVYVNKYRGVLDCMSQSYQKEGLKVFFRGITVNAVRGFPMSAAMFLGYELSLQAIRGDHVVTSP</sequence>
<protein>
    <recommendedName>
        <fullName>Solute carrier family 25 member 48</fullName>
    </recommendedName>
</protein>
<proteinExistence type="evidence at transcript level"/>
<feature type="chain" id="PRO_0000325767" description="Solute carrier family 25 member 48">
    <location>
        <begin position="1"/>
        <end position="311"/>
    </location>
</feature>
<feature type="transmembrane region" description="Helical; Name=1" evidence="2">
    <location>
        <begin position="9"/>
        <end position="29"/>
    </location>
</feature>
<feature type="transmembrane region" description="Helical; Name=2" evidence="2">
    <location>
        <begin position="61"/>
        <end position="81"/>
    </location>
</feature>
<feature type="transmembrane region" description="Helical; Name=3" evidence="2">
    <location>
        <begin position="107"/>
        <end position="127"/>
    </location>
</feature>
<feature type="transmembrane region" description="Helical; Name=4" evidence="2">
    <location>
        <begin position="193"/>
        <end position="213"/>
    </location>
</feature>
<feature type="transmembrane region" description="Helical; Name=5" evidence="2">
    <location>
        <begin position="217"/>
        <end position="237"/>
    </location>
</feature>
<feature type="transmembrane region" description="Helical; Name=6" evidence="2">
    <location>
        <begin position="277"/>
        <end position="295"/>
    </location>
</feature>
<feature type="repeat" description="Solcar 1">
    <location>
        <begin position="3"/>
        <end position="86"/>
    </location>
</feature>
<feature type="repeat" description="Solcar 2">
    <location>
        <begin position="100"/>
        <end position="205"/>
    </location>
</feature>
<feature type="repeat" description="Solcar 3">
    <location>
        <begin position="214"/>
        <end position="301"/>
    </location>
</feature>